<comment type="function">
    <text evidence="1">Catalyzes the transfer of the diacylglyceryl group from phosphatidylglycerol to the sulfhydryl group of the N-terminal cysteine of a prolipoprotein, the first step in the formation of mature lipoproteins.</text>
</comment>
<comment type="catalytic activity">
    <reaction evidence="1">
        <text>L-cysteinyl-[prolipoprotein] + a 1,2-diacyl-sn-glycero-3-phospho-(1'-sn-glycerol) = an S-1,2-diacyl-sn-glyceryl-L-cysteinyl-[prolipoprotein] + sn-glycerol 1-phosphate + H(+)</text>
        <dbReference type="Rhea" id="RHEA:56712"/>
        <dbReference type="Rhea" id="RHEA-COMP:14679"/>
        <dbReference type="Rhea" id="RHEA-COMP:14680"/>
        <dbReference type="ChEBI" id="CHEBI:15378"/>
        <dbReference type="ChEBI" id="CHEBI:29950"/>
        <dbReference type="ChEBI" id="CHEBI:57685"/>
        <dbReference type="ChEBI" id="CHEBI:64716"/>
        <dbReference type="ChEBI" id="CHEBI:140658"/>
        <dbReference type="EC" id="2.5.1.145"/>
    </reaction>
</comment>
<comment type="pathway">
    <text evidence="1">Protein modification; lipoprotein biosynthesis (diacylglyceryl transfer).</text>
</comment>
<comment type="subcellular location">
    <subcellularLocation>
        <location evidence="1">Cell membrane</location>
        <topology evidence="1">Multi-pass membrane protein</topology>
    </subcellularLocation>
</comment>
<comment type="similarity">
    <text evidence="1">Belongs to the Lgt family.</text>
</comment>
<organism>
    <name type="scientific">Mycobacterium tuberculosis (strain ATCC 25618 / H37Rv)</name>
    <dbReference type="NCBI Taxonomy" id="83332"/>
    <lineage>
        <taxon>Bacteria</taxon>
        <taxon>Bacillati</taxon>
        <taxon>Actinomycetota</taxon>
        <taxon>Actinomycetes</taxon>
        <taxon>Mycobacteriales</taxon>
        <taxon>Mycobacteriaceae</taxon>
        <taxon>Mycobacterium</taxon>
        <taxon>Mycobacterium tuberculosis complex</taxon>
    </lineage>
</organism>
<reference key="1">
    <citation type="journal article" date="1998" name="Nature">
        <title>Deciphering the biology of Mycobacterium tuberculosis from the complete genome sequence.</title>
        <authorList>
            <person name="Cole S.T."/>
            <person name="Brosch R."/>
            <person name="Parkhill J."/>
            <person name="Garnier T."/>
            <person name="Churcher C.M."/>
            <person name="Harris D.E."/>
            <person name="Gordon S.V."/>
            <person name="Eiglmeier K."/>
            <person name="Gas S."/>
            <person name="Barry C.E. III"/>
            <person name="Tekaia F."/>
            <person name="Badcock K."/>
            <person name="Basham D."/>
            <person name="Brown D."/>
            <person name="Chillingworth T."/>
            <person name="Connor R."/>
            <person name="Davies R.M."/>
            <person name="Devlin K."/>
            <person name="Feltwell T."/>
            <person name="Gentles S."/>
            <person name="Hamlin N."/>
            <person name="Holroyd S."/>
            <person name="Hornsby T."/>
            <person name="Jagels K."/>
            <person name="Krogh A."/>
            <person name="McLean J."/>
            <person name="Moule S."/>
            <person name="Murphy L.D."/>
            <person name="Oliver S."/>
            <person name="Osborne J."/>
            <person name="Quail M.A."/>
            <person name="Rajandream M.A."/>
            <person name="Rogers J."/>
            <person name="Rutter S."/>
            <person name="Seeger K."/>
            <person name="Skelton S."/>
            <person name="Squares S."/>
            <person name="Squares R."/>
            <person name="Sulston J.E."/>
            <person name="Taylor K."/>
            <person name="Whitehead S."/>
            <person name="Barrell B.G."/>
        </authorList>
    </citation>
    <scope>NUCLEOTIDE SEQUENCE [LARGE SCALE GENOMIC DNA]</scope>
    <source>
        <strain>ATCC 25618 / H37Rv</strain>
    </source>
</reference>
<reference key="2">
    <citation type="journal article" date="2011" name="Mol. Cell. Proteomics">
        <title>Proteogenomic analysis of Mycobacterium tuberculosis by high resolution mass spectrometry.</title>
        <authorList>
            <person name="Kelkar D.S."/>
            <person name="Kumar D."/>
            <person name="Kumar P."/>
            <person name="Balakrishnan L."/>
            <person name="Muthusamy B."/>
            <person name="Yadav A.K."/>
            <person name="Shrivastava P."/>
            <person name="Marimuthu A."/>
            <person name="Anand S."/>
            <person name="Sundaram H."/>
            <person name="Kingsbury R."/>
            <person name="Harsha H.C."/>
            <person name="Nair B."/>
            <person name="Prasad T.S."/>
            <person name="Chauhan D.S."/>
            <person name="Katoch K."/>
            <person name="Katoch V.M."/>
            <person name="Kumar P."/>
            <person name="Chaerkady R."/>
            <person name="Ramachandran S."/>
            <person name="Dash D."/>
            <person name="Pandey A."/>
        </authorList>
    </citation>
    <scope>IDENTIFICATION BY MASS SPECTROMETRY [LARGE SCALE ANALYSIS]</scope>
    <source>
        <strain>ATCC 25618 / H37Rv</strain>
    </source>
</reference>
<gene>
    <name evidence="1" type="primary">lgt</name>
    <name type="ordered locus">Rv1614</name>
    <name type="ORF">MTCY01B2.06</name>
</gene>
<protein>
    <recommendedName>
        <fullName evidence="1">Phosphatidylglycerol--prolipoprotein diacylglyceryl transferase</fullName>
        <ecNumber evidence="1">2.5.1.145</ecNumber>
    </recommendedName>
</protein>
<evidence type="ECO:0000255" key="1">
    <source>
        <dbReference type="HAMAP-Rule" id="MF_01147"/>
    </source>
</evidence>
<evidence type="ECO:0000256" key="2">
    <source>
        <dbReference type="SAM" id="MobiDB-lite"/>
    </source>
</evidence>
<sequence length="468" mass="50392">MRMLPSYIPSPPRGVWYLGPLPVRAYAVCVITGIIVALLIGDRRLTARGGERGMTYDIALWAVPFGLIGGRLYHLATDWRTYFGDGGAGLAAALRIWDGGLGIWGAVTLGVMGAWIGCRRCGIPLPVLLDAVAPGVVLAQAIGRLGNYFNQELYGRETTMPWGLEIFYRRDPSGFDVPNSLDGVSTGQVAFVVQPTFLYELIWNVLVFVALIYIDRRFIIGHGRLFGFYVAFYCAGRFCVELLRDDPATLIAGIRINSFTSTFVFIGAVVYIILAPKGREAPGALRGSEYVVDEALEREPAELAAAAVASAASAVGPVGPGEPNQPDDVAEAVKAEVAEVTDEVAAESVVQVADRDGESTPAVEETSEADIEREQPGDLAGQAPAAHQVDAEAASAAPEEPAALASEAHDETEPEVPEKAAPIPDPAKPDELAVAGPGDDPAEPDGIRRQDDFSSRRRRWWRLRRRRQ</sequence>
<feature type="chain" id="PRO_0000172639" description="Phosphatidylglycerol--prolipoprotein diacylglyceryl transferase">
    <location>
        <begin position="1"/>
        <end position="468"/>
    </location>
</feature>
<feature type="transmembrane region" description="Helical" evidence="1">
    <location>
        <begin position="21"/>
        <end position="41"/>
    </location>
</feature>
<feature type="transmembrane region" description="Helical" evidence="1">
    <location>
        <begin position="56"/>
        <end position="76"/>
    </location>
</feature>
<feature type="transmembrane region" description="Helical" evidence="1">
    <location>
        <begin position="96"/>
        <end position="116"/>
    </location>
</feature>
<feature type="transmembrane region" description="Helical" evidence="1">
    <location>
        <begin position="192"/>
        <end position="212"/>
    </location>
</feature>
<feature type="transmembrane region" description="Helical" evidence="1">
    <location>
        <begin position="218"/>
        <end position="238"/>
    </location>
</feature>
<feature type="transmembrane region" description="Helical" evidence="1">
    <location>
        <begin position="256"/>
        <end position="276"/>
    </location>
</feature>
<feature type="region of interest" description="Disordered" evidence="2">
    <location>
        <begin position="349"/>
        <end position="468"/>
    </location>
</feature>
<feature type="compositionally biased region" description="Low complexity" evidence="2">
    <location>
        <begin position="391"/>
        <end position="406"/>
    </location>
</feature>
<feature type="compositionally biased region" description="Basic and acidic residues" evidence="2">
    <location>
        <begin position="445"/>
        <end position="455"/>
    </location>
</feature>
<feature type="compositionally biased region" description="Basic residues" evidence="2">
    <location>
        <begin position="456"/>
        <end position="468"/>
    </location>
</feature>
<feature type="binding site" evidence="1">
    <location>
        <position position="144"/>
    </location>
    <ligand>
        <name>a 1,2-diacyl-sn-glycero-3-phospho-(1'-sn-glycerol)</name>
        <dbReference type="ChEBI" id="CHEBI:64716"/>
    </ligand>
</feature>
<keyword id="KW-1003">Cell membrane</keyword>
<keyword id="KW-0472">Membrane</keyword>
<keyword id="KW-1185">Reference proteome</keyword>
<keyword id="KW-0808">Transferase</keyword>
<keyword id="KW-0812">Transmembrane</keyword>
<keyword id="KW-1133">Transmembrane helix</keyword>
<accession>P9WK93</accession>
<accession>L0TA60</accession>
<accession>O06131</accession>
<name>LGT_MYCTU</name>
<dbReference type="EC" id="2.5.1.145" evidence="1"/>
<dbReference type="EMBL" id="AL123456">
    <property type="protein sequence ID" value="CCP44378.1"/>
    <property type="molecule type" value="Genomic_DNA"/>
</dbReference>
<dbReference type="PIR" id="D70557">
    <property type="entry name" value="D70557"/>
</dbReference>
<dbReference type="RefSeq" id="NP_216130.1">
    <property type="nucleotide sequence ID" value="NC_000962.3"/>
</dbReference>
<dbReference type="RefSeq" id="WP_003408002.1">
    <property type="nucleotide sequence ID" value="NZ_NVQJ01000016.1"/>
</dbReference>
<dbReference type="SMR" id="P9WK93"/>
<dbReference type="FunCoup" id="P9WK93">
    <property type="interactions" value="14"/>
</dbReference>
<dbReference type="STRING" id="83332.Rv1614"/>
<dbReference type="PaxDb" id="83332-Rv1614"/>
<dbReference type="DNASU" id="885292"/>
<dbReference type="GeneID" id="885292"/>
<dbReference type="KEGG" id="mtu:Rv1614"/>
<dbReference type="KEGG" id="mtv:RVBD_1614"/>
<dbReference type="TubercuList" id="Rv1614"/>
<dbReference type="eggNOG" id="COG0682">
    <property type="taxonomic scope" value="Bacteria"/>
</dbReference>
<dbReference type="InParanoid" id="P9WK93"/>
<dbReference type="OrthoDB" id="871140at2"/>
<dbReference type="PhylomeDB" id="P9WK93"/>
<dbReference type="UniPathway" id="UPA00664"/>
<dbReference type="Proteomes" id="UP000001584">
    <property type="component" value="Chromosome"/>
</dbReference>
<dbReference type="GO" id="GO:0005886">
    <property type="term" value="C:plasma membrane"/>
    <property type="evidence" value="ECO:0007005"/>
    <property type="project" value="MTBBASE"/>
</dbReference>
<dbReference type="GO" id="GO:0008961">
    <property type="term" value="F:phosphatidylglycerol-prolipoprotein diacylglyceryl transferase activity"/>
    <property type="evidence" value="ECO:0000318"/>
    <property type="project" value="GO_Central"/>
</dbReference>
<dbReference type="GO" id="GO:0042158">
    <property type="term" value="P:lipoprotein biosynthetic process"/>
    <property type="evidence" value="ECO:0000318"/>
    <property type="project" value="GO_Central"/>
</dbReference>
<dbReference type="HAMAP" id="MF_01147">
    <property type="entry name" value="Lgt"/>
    <property type="match status" value="1"/>
</dbReference>
<dbReference type="InterPro" id="IPR001640">
    <property type="entry name" value="Lgt"/>
</dbReference>
<dbReference type="NCBIfam" id="TIGR00544">
    <property type="entry name" value="lgt"/>
    <property type="match status" value="1"/>
</dbReference>
<dbReference type="NCBIfam" id="NF009611">
    <property type="entry name" value="PRK13108.1"/>
    <property type="match status" value="1"/>
</dbReference>
<dbReference type="PANTHER" id="PTHR30589:SF0">
    <property type="entry name" value="PHOSPHATIDYLGLYCEROL--PROLIPOPROTEIN DIACYLGLYCERYL TRANSFERASE"/>
    <property type="match status" value="1"/>
</dbReference>
<dbReference type="PANTHER" id="PTHR30589">
    <property type="entry name" value="PROLIPOPROTEIN DIACYLGLYCERYL TRANSFERASE"/>
    <property type="match status" value="1"/>
</dbReference>
<dbReference type="Pfam" id="PF01790">
    <property type="entry name" value="LGT"/>
    <property type="match status" value="1"/>
</dbReference>
<dbReference type="PROSITE" id="PS01311">
    <property type="entry name" value="LGT"/>
    <property type="match status" value="1"/>
</dbReference>
<proteinExistence type="evidence at protein level"/>